<keyword id="KW-0249">Electron transport</keyword>
<keyword id="KW-0472">Membrane</keyword>
<keyword id="KW-0496">Mitochondrion</keyword>
<keyword id="KW-0999">Mitochondrion inner membrane</keyword>
<keyword id="KW-0597">Phosphoprotein</keyword>
<keyword id="KW-1185">Reference proteome</keyword>
<keyword id="KW-0679">Respiratory chain</keyword>
<keyword id="KW-0813">Transport</keyword>
<organism>
    <name type="scientific">Pongo abelii</name>
    <name type="common">Sumatran orangutan</name>
    <name type="synonym">Pongo pygmaeus abelii</name>
    <dbReference type="NCBI Taxonomy" id="9601"/>
    <lineage>
        <taxon>Eukaryota</taxon>
        <taxon>Metazoa</taxon>
        <taxon>Chordata</taxon>
        <taxon>Craniata</taxon>
        <taxon>Vertebrata</taxon>
        <taxon>Euteleostomi</taxon>
        <taxon>Mammalia</taxon>
        <taxon>Eutheria</taxon>
        <taxon>Euarchontoglires</taxon>
        <taxon>Primates</taxon>
        <taxon>Haplorrhini</taxon>
        <taxon>Catarrhini</taxon>
        <taxon>Hominidae</taxon>
        <taxon>Pongo</taxon>
    </lineage>
</organism>
<accession>P0CC01</accession>
<accession>Q0MQF1</accession>
<accession>Q5REN0</accession>
<proteinExistence type="evidence at transcript level"/>
<feature type="chain" id="PRO_0000118832" description="NADH dehydrogenase [ubiquinone] 1 beta subcomplex subunit 10">
    <location>
        <begin position="1"/>
        <end position="172"/>
    </location>
</feature>
<feature type="modified residue" description="Phosphoserine" evidence="1">
    <location>
        <position position="145"/>
    </location>
</feature>
<comment type="function">
    <text evidence="1">Accessory subunit that is involved in the functional assembly of the mitochondrial respiratory chain complex I. Complex I has an NADH dehydrogenase activity with ubiquinone as an immediate electron acceptor and mediates the transfer of electrons from NADH to the respiratory chain.</text>
</comment>
<comment type="subunit">
    <text evidence="1">Complex I is composed of 45 different subunits. Interacts with CHCHD4.</text>
</comment>
<comment type="subcellular location">
    <subcellularLocation>
        <location evidence="1">Mitochondrion inner membrane</location>
        <topology evidence="1">Peripheral membrane protein</topology>
        <orientation evidence="1">Matrix side</orientation>
    </subcellularLocation>
</comment>
<comment type="similarity">
    <text evidence="2">Belongs to the complex I NDUFB10 subunit family.</text>
</comment>
<gene>
    <name type="primary">NDUFB10</name>
</gene>
<dbReference type="EMBL" id="CR857492">
    <property type="protein sequence ID" value="CAH89777.1"/>
    <property type="molecule type" value="mRNA"/>
</dbReference>
<dbReference type="RefSeq" id="NP_001124813.1">
    <property type="nucleotide sequence ID" value="NM_001131341.1"/>
</dbReference>
<dbReference type="SMR" id="P0CC01"/>
<dbReference type="FunCoup" id="P0CC01">
    <property type="interactions" value="827"/>
</dbReference>
<dbReference type="STRING" id="9601.ENSPPYP00000007895"/>
<dbReference type="GeneID" id="100171671"/>
<dbReference type="KEGG" id="pon:100171671"/>
<dbReference type="CTD" id="4716"/>
<dbReference type="eggNOG" id="KOG4009">
    <property type="taxonomic scope" value="Eukaryota"/>
</dbReference>
<dbReference type="InParanoid" id="P0CC01"/>
<dbReference type="OrthoDB" id="6017729at2759"/>
<dbReference type="Proteomes" id="UP000001595">
    <property type="component" value="Unplaced"/>
</dbReference>
<dbReference type="GO" id="GO:0005743">
    <property type="term" value="C:mitochondrial inner membrane"/>
    <property type="evidence" value="ECO:0000250"/>
    <property type="project" value="UniProtKB"/>
</dbReference>
<dbReference type="GO" id="GO:0045271">
    <property type="term" value="C:respiratory chain complex I"/>
    <property type="evidence" value="ECO:0000250"/>
    <property type="project" value="UniProtKB"/>
</dbReference>
<dbReference type="InterPro" id="IPR019377">
    <property type="entry name" value="NADH_UbQ_OxRdtase_su10"/>
</dbReference>
<dbReference type="InterPro" id="IPR039993">
    <property type="entry name" value="NDUFB10"/>
</dbReference>
<dbReference type="PANTHER" id="PTHR13094:SF1">
    <property type="entry name" value="NADH DEHYDROGENASE [UBIQUINONE] 1 BETA SUBCOMPLEX SUBUNIT 10"/>
    <property type="match status" value="1"/>
</dbReference>
<dbReference type="PANTHER" id="PTHR13094">
    <property type="entry name" value="NADH-UBIQUINONE OXIDOREDUCTASE PDSW SUBUNIT"/>
    <property type="match status" value="1"/>
</dbReference>
<dbReference type="Pfam" id="PF10249">
    <property type="entry name" value="NDUFB10"/>
    <property type="match status" value="1"/>
</dbReference>
<sequence>MPDSWDKDVYPEPPRRTPVLPNPIVYMMKAFDLIVDRPVTLAREFVERQHAKNRYYYYHRQYRRVPDITECKEEDIMCMYEAEMQWRRDYKVDQEIINIMQDRLKACQVREGESYQQNCAKEVEQFTQVAKAYQDRYQDLGVYYSARKCLAKQKQRMLQERKAAREAAAATS</sequence>
<reference key="1">
    <citation type="submission" date="2004-11" db="EMBL/GenBank/DDBJ databases">
        <authorList>
            <consortium name="The German cDNA consortium"/>
        </authorList>
    </citation>
    <scope>NUCLEOTIDE SEQUENCE [LARGE SCALE MRNA]</scope>
    <source>
        <tissue>Heart</tissue>
    </source>
</reference>
<protein>
    <recommendedName>
        <fullName>NADH dehydrogenase [ubiquinone] 1 beta subcomplex subunit 10</fullName>
    </recommendedName>
    <alternativeName>
        <fullName>Complex I-PDSW</fullName>
        <shortName>CI-PDSW</shortName>
    </alternativeName>
    <alternativeName>
        <fullName>NADH-ubiquinone oxidoreductase PDSW subunit</fullName>
    </alternativeName>
</protein>
<evidence type="ECO:0000250" key="1">
    <source>
        <dbReference type="UniProtKB" id="O96000"/>
    </source>
</evidence>
<evidence type="ECO:0000305" key="2"/>
<name>NDUBA_PONAB</name>